<reference key="1">
    <citation type="journal article" date="2006" name="Proc. Natl. Acad. Sci. U.S.A.">
        <title>Genomic analysis of the uncultivated marine crenarchaeote Cenarchaeum symbiosum.</title>
        <authorList>
            <person name="Hallam S.J."/>
            <person name="Konstantinidis K.T."/>
            <person name="Putnam N."/>
            <person name="Schleper C."/>
            <person name="Watanabe Y."/>
            <person name="Sugahara J."/>
            <person name="Preston C."/>
            <person name="de la Torre J."/>
            <person name="Richardson P.M."/>
            <person name="DeLong E.F."/>
        </authorList>
    </citation>
    <scope>NUCLEOTIDE SEQUENCE [LARGE SCALE GENOMIC DNA]</scope>
    <source>
        <strain>A</strain>
    </source>
</reference>
<proteinExistence type="inferred from homology"/>
<sequence>MAQLLVIVKILPKGTEVDLDEMMEGLKGGLKGGIVLRRYAKEPLAFGLHFVKAEFILEDKEGQNDALEATVRSAKGVSEYEVLNMSRMSVDMK</sequence>
<keyword id="KW-0251">Elongation factor</keyword>
<keyword id="KW-0648">Protein biosynthesis</keyword>
<keyword id="KW-1185">Reference proteome</keyword>
<comment type="function">
    <text evidence="1">Promotes the exchange of GDP for GTP in EF-1-alpha/GDP, thus allowing the regeneration of EF-1-alpha/GTP that could then be used to form the ternary complex EF-1-alpha/GTP/AAtRNA.</text>
</comment>
<comment type="similarity">
    <text evidence="1">Belongs to the EF-1-beta/EF-1-delta family.</text>
</comment>
<dbReference type="EMBL" id="DP000238">
    <property type="protein sequence ID" value="ABK77157.1"/>
    <property type="molecule type" value="Genomic_DNA"/>
</dbReference>
<dbReference type="SMR" id="A0RUZ0"/>
<dbReference type="STRING" id="414004.CENSYa_0524"/>
<dbReference type="EnsemblBacteria" id="ABK77157">
    <property type="protein sequence ID" value="ABK77157"/>
    <property type="gene ID" value="CENSYa_0524"/>
</dbReference>
<dbReference type="KEGG" id="csy:CENSYa_0524"/>
<dbReference type="PATRIC" id="fig|414004.10.peg.482"/>
<dbReference type="HOGENOM" id="CLU_165896_1_0_2"/>
<dbReference type="Proteomes" id="UP000000758">
    <property type="component" value="Chromosome"/>
</dbReference>
<dbReference type="GO" id="GO:0003746">
    <property type="term" value="F:translation elongation factor activity"/>
    <property type="evidence" value="ECO:0007669"/>
    <property type="project" value="UniProtKB-UniRule"/>
</dbReference>
<dbReference type="Gene3D" id="3.30.70.60">
    <property type="match status" value="1"/>
</dbReference>
<dbReference type="HAMAP" id="MF_00043">
    <property type="entry name" value="EF1_beta"/>
    <property type="match status" value="1"/>
</dbReference>
<dbReference type="InterPro" id="IPR036219">
    <property type="entry name" value="eEF-1beta-like_sf"/>
</dbReference>
<dbReference type="InterPro" id="IPR014038">
    <property type="entry name" value="EF1B_bsu/dsu_GNE"/>
</dbReference>
<dbReference type="InterPro" id="IPR014717">
    <property type="entry name" value="Transl_elong_EF1B/ribsomal_bS6"/>
</dbReference>
<dbReference type="InterPro" id="IPR004542">
    <property type="entry name" value="Transl_elong_EF1B_B_arc"/>
</dbReference>
<dbReference type="NCBIfam" id="NF001670">
    <property type="entry name" value="PRK00435.1"/>
    <property type="match status" value="1"/>
</dbReference>
<dbReference type="PANTHER" id="PTHR39647">
    <property type="entry name" value="ELONGATION FACTOR 1-BETA"/>
    <property type="match status" value="1"/>
</dbReference>
<dbReference type="PANTHER" id="PTHR39647:SF1">
    <property type="entry name" value="ELONGATION FACTOR 1-BETA"/>
    <property type="match status" value="1"/>
</dbReference>
<dbReference type="Pfam" id="PF00736">
    <property type="entry name" value="EF1_GNE"/>
    <property type="match status" value="1"/>
</dbReference>
<dbReference type="SMART" id="SM00888">
    <property type="entry name" value="EF1_GNE"/>
    <property type="match status" value="1"/>
</dbReference>
<dbReference type="SUPFAM" id="SSF54984">
    <property type="entry name" value="eEF-1beta-like"/>
    <property type="match status" value="1"/>
</dbReference>
<accession>A0RUZ0</accession>
<organism>
    <name type="scientific">Cenarchaeum symbiosum (strain A)</name>
    <dbReference type="NCBI Taxonomy" id="414004"/>
    <lineage>
        <taxon>Archaea</taxon>
        <taxon>Nitrososphaerota</taxon>
        <taxon>Candidatus Cenarchaeales</taxon>
        <taxon>Candidatus Cenarchaeaceae</taxon>
        <taxon>Candidatus Cenarchaeum</taxon>
    </lineage>
</organism>
<name>EF1B_CENSY</name>
<evidence type="ECO:0000255" key="1">
    <source>
        <dbReference type="HAMAP-Rule" id="MF_00043"/>
    </source>
</evidence>
<feature type="chain" id="PRO_0000366419" description="Elongation factor 1-beta">
    <location>
        <begin position="1"/>
        <end position="93"/>
    </location>
</feature>
<protein>
    <recommendedName>
        <fullName evidence="1">Elongation factor 1-beta</fullName>
        <shortName evidence="1">EF-1-beta</shortName>
    </recommendedName>
    <alternativeName>
        <fullName evidence="1">aEF-1beta</fullName>
    </alternativeName>
</protein>
<gene>
    <name evidence="1" type="primary">ef1b</name>
    <name type="ordered locus">CENSYa_0524</name>
</gene>